<keyword id="KW-1003">Cell membrane</keyword>
<keyword id="KW-1015">Disulfide bond</keyword>
<keyword id="KW-0325">Glycoprotein</keyword>
<keyword id="KW-0336">GPI-anchor</keyword>
<keyword id="KW-0449">Lipoprotein</keyword>
<keyword id="KW-0456">Lyase</keyword>
<keyword id="KW-0472">Membrane</keyword>
<keyword id="KW-0479">Metal-binding</keyword>
<keyword id="KW-1185">Reference proteome</keyword>
<keyword id="KW-0732">Signal</keyword>
<keyword id="KW-0862">Zinc</keyword>
<proteinExistence type="evidence at protein level"/>
<gene>
    <name type="primary">CA4</name>
</gene>
<name>CAH4_RABIT</name>
<sequence>MQLLFALLALGALRPLAGEELHWCYEIQASNYSCLGPDKWQEDCQKSRQSPINIVTTKAEVDHSLGRFHFSGYDQREARLVENNGHSVMVSLGDEISISGGGLPARYRATQLHLHWSQELDRGSEHSLDGERSAMEMHIVHQKETGTSGNEVQDSDDSIAVLAFLVEAGPTMNEGFQPLVTALSAISIPGTNTTMAPSSLWDLLPAEEELRHYFRYMGSLTTPACSETVVWTVFQEPIRLHRDQILEFSSKLYYDQERKMNMKDNVRPLQRLGDRSVFKSQAAGQLLPLPLPTLLVPTLACVMAGLLR</sequence>
<accession>P48283</accession>
<feature type="signal peptide" evidence="5">
    <location>
        <begin position="1"/>
        <end position="18"/>
    </location>
</feature>
<feature type="chain" id="PRO_0000004230" description="Carbonic anhydrase 4">
    <location>
        <begin position="19"/>
        <end position="280"/>
    </location>
</feature>
<feature type="propeptide" id="PRO_0000004231" description="Removed in mature form" evidence="3">
    <location>
        <begin position="281"/>
        <end position="308"/>
    </location>
</feature>
<feature type="domain" description="Alpha-carbonic anhydrase" evidence="6">
    <location>
        <begin position="21"/>
        <end position="281"/>
    </location>
</feature>
<feature type="active site" description="Proton donor/acceptor" evidence="2">
    <location>
        <position position="86"/>
    </location>
</feature>
<feature type="binding site" evidence="4">
    <location>
        <position position="113"/>
    </location>
    <ligand>
        <name>Zn(2+)</name>
        <dbReference type="ChEBI" id="CHEBI:29105"/>
        <note>catalytic</note>
    </ligand>
</feature>
<feature type="binding site" evidence="4">
    <location>
        <position position="115"/>
    </location>
    <ligand>
        <name>Zn(2+)</name>
        <dbReference type="ChEBI" id="CHEBI:29105"/>
        <note>catalytic</note>
    </ligand>
</feature>
<feature type="binding site" evidence="4">
    <location>
        <position position="138"/>
    </location>
    <ligand>
        <name>Zn(2+)</name>
        <dbReference type="ChEBI" id="CHEBI:29105"/>
        <note>catalytic</note>
    </ligand>
</feature>
<feature type="binding site" evidence="2">
    <location>
        <begin position="221"/>
        <end position="222"/>
    </location>
    <ligand>
        <name>substrate</name>
    </ligand>
</feature>
<feature type="lipid moiety-binding region" description="GPI-anchor amidated serine" evidence="3">
    <location>
        <position position="280"/>
    </location>
</feature>
<feature type="glycosylation site" description="N-linked (GlcNAc...) asparagine" evidence="5">
    <location>
        <position position="31"/>
    </location>
</feature>
<feature type="glycosylation site" description="N-linked (GlcNAc...) asparagine" evidence="5">
    <location>
        <position position="192"/>
    </location>
</feature>
<feature type="disulfide bond" evidence="4">
    <location>
        <begin position="24"/>
        <end position="34"/>
    </location>
</feature>
<feature type="disulfide bond" evidence="4">
    <location>
        <begin position="44"/>
        <end position="225"/>
    </location>
</feature>
<comment type="function">
    <text evidence="3">Catalyzes the reversible hydration of carbon dioxide into bicarbonate and protons and thus is essential to maintaining intracellular and extracellular pH. May stimulate the sodium/bicarbonate transporter activity of SLC4A4 that acts in pH homeostasis. It is essential for acid overload removal from the retina and retina epithelium, and acid release in the choriocapillaris in the choroid.</text>
</comment>
<comment type="catalytic activity">
    <reaction evidence="3">
        <text>hydrogencarbonate + H(+) = CO2 + H2O</text>
        <dbReference type="Rhea" id="RHEA:10748"/>
        <dbReference type="ChEBI" id="CHEBI:15377"/>
        <dbReference type="ChEBI" id="CHEBI:15378"/>
        <dbReference type="ChEBI" id="CHEBI:16526"/>
        <dbReference type="ChEBI" id="CHEBI:17544"/>
        <dbReference type="EC" id="4.2.1.1"/>
    </reaction>
    <physiologicalReaction direction="left-to-right" evidence="3">
        <dbReference type="Rhea" id="RHEA:10749"/>
    </physiologicalReaction>
    <physiologicalReaction direction="right-to-left" evidence="3">
        <dbReference type="Rhea" id="RHEA:10750"/>
    </physiologicalReaction>
</comment>
<comment type="cofactor">
    <cofactor evidence="3">
        <name>Zn(2+)</name>
        <dbReference type="ChEBI" id="CHEBI:29105"/>
    </cofactor>
</comment>
<comment type="activity regulation">
    <text evidence="1">Inhibited by acetazolamide.</text>
</comment>
<comment type="subunit">
    <text evidence="7">Interacts with SLC4A4.</text>
</comment>
<comment type="interaction">
    <interactant intactId="EBI-6859264">
        <id>P48283</id>
    </interactant>
    <interactant intactId="EBI-6859278">
        <id>Q9Y6R1-1</id>
        <label>SLC4A4</label>
    </interactant>
    <organismsDiffer>true</organismsDiffer>
    <experiments>2</experiments>
</comment>
<comment type="subcellular location">
    <subcellularLocation>
        <location evidence="3">Cell membrane</location>
        <topology evidence="3">Lipid-anchor</topology>
        <topology evidence="3">GPI-anchor</topology>
    </subcellularLocation>
</comment>
<comment type="similarity">
    <text evidence="8">Belongs to the alpha-carbonic anhydrase family.</text>
</comment>
<protein>
    <recommendedName>
        <fullName>Carbonic anhydrase 4</fullName>
        <ecNumber evidence="3">4.2.1.1</ecNumber>
    </recommendedName>
    <alternativeName>
        <fullName>Carbonate dehydratase IV</fullName>
    </alternativeName>
    <alternativeName>
        <fullName>Carbonic anhydrase IV</fullName>
        <shortName>CA-IV</shortName>
    </alternativeName>
</protein>
<evidence type="ECO:0000250" key="1"/>
<evidence type="ECO:0000250" key="2">
    <source>
        <dbReference type="UniProtKB" id="P00918"/>
    </source>
</evidence>
<evidence type="ECO:0000250" key="3">
    <source>
        <dbReference type="UniProtKB" id="P22748"/>
    </source>
</evidence>
<evidence type="ECO:0000250" key="4">
    <source>
        <dbReference type="UniProtKB" id="Q64444"/>
    </source>
</evidence>
<evidence type="ECO:0000255" key="5"/>
<evidence type="ECO:0000255" key="6">
    <source>
        <dbReference type="PROSITE-ProRule" id="PRU01134"/>
    </source>
</evidence>
<evidence type="ECO:0000269" key="7">
    <source>
    </source>
</evidence>
<evidence type="ECO:0000305" key="8"/>
<dbReference type="EC" id="4.2.1.1" evidence="3"/>
<dbReference type="EMBL" id="L48928">
    <property type="protein sequence ID" value="AAC37337.1"/>
    <property type="molecule type" value="mRNA"/>
</dbReference>
<dbReference type="EMBL" id="U58871">
    <property type="protein sequence ID" value="AAB09467.1"/>
    <property type="molecule type" value="mRNA"/>
</dbReference>
<dbReference type="RefSeq" id="NP_001075841.1">
    <property type="nucleotide sequence ID" value="NM_001082372.1"/>
</dbReference>
<dbReference type="SMR" id="P48283"/>
<dbReference type="FunCoup" id="P48283">
    <property type="interactions" value="49"/>
</dbReference>
<dbReference type="IntAct" id="P48283">
    <property type="interactions" value="1"/>
</dbReference>
<dbReference type="STRING" id="9986.ENSOCUP00000046147"/>
<dbReference type="GlyCosmos" id="P48283">
    <property type="glycosylation" value="2 sites, No reported glycans"/>
</dbReference>
<dbReference type="PaxDb" id="9986-ENSOCUP00000008104"/>
<dbReference type="GeneID" id="100009226"/>
<dbReference type="KEGG" id="ocu:100009226"/>
<dbReference type="CTD" id="762"/>
<dbReference type="eggNOG" id="KOG0382">
    <property type="taxonomic scope" value="Eukaryota"/>
</dbReference>
<dbReference type="InParanoid" id="P48283"/>
<dbReference type="OrthoDB" id="429145at2759"/>
<dbReference type="Proteomes" id="UP000001811">
    <property type="component" value="Unplaced"/>
</dbReference>
<dbReference type="GO" id="GO:0005886">
    <property type="term" value="C:plasma membrane"/>
    <property type="evidence" value="ECO:0007669"/>
    <property type="project" value="UniProtKB-SubCell"/>
</dbReference>
<dbReference type="GO" id="GO:0098552">
    <property type="term" value="C:side of membrane"/>
    <property type="evidence" value="ECO:0007669"/>
    <property type="project" value="UniProtKB-KW"/>
</dbReference>
<dbReference type="GO" id="GO:0004089">
    <property type="term" value="F:carbonate dehydratase activity"/>
    <property type="evidence" value="ECO:0007669"/>
    <property type="project" value="UniProtKB-EC"/>
</dbReference>
<dbReference type="GO" id="GO:0008270">
    <property type="term" value="F:zinc ion binding"/>
    <property type="evidence" value="ECO:0007669"/>
    <property type="project" value="InterPro"/>
</dbReference>
<dbReference type="CDD" id="cd03117">
    <property type="entry name" value="alpha_CA_IV_XV_like"/>
    <property type="match status" value="1"/>
</dbReference>
<dbReference type="FunFam" id="3.10.200.10:FF:000003">
    <property type="entry name" value="Carbonic anhydrase 12"/>
    <property type="match status" value="1"/>
</dbReference>
<dbReference type="Gene3D" id="3.10.200.10">
    <property type="entry name" value="Alpha carbonic anhydrase"/>
    <property type="match status" value="1"/>
</dbReference>
<dbReference type="InterPro" id="IPR041874">
    <property type="entry name" value="CA4/CA15"/>
</dbReference>
<dbReference type="InterPro" id="IPR001148">
    <property type="entry name" value="CA_dom"/>
</dbReference>
<dbReference type="InterPro" id="IPR036398">
    <property type="entry name" value="CA_dom_sf"/>
</dbReference>
<dbReference type="InterPro" id="IPR023561">
    <property type="entry name" value="Carbonic_anhydrase_a-class"/>
</dbReference>
<dbReference type="PANTHER" id="PTHR18952">
    <property type="entry name" value="CARBONIC ANHYDRASE"/>
    <property type="match status" value="1"/>
</dbReference>
<dbReference type="PANTHER" id="PTHR18952:SF95">
    <property type="entry name" value="CARBONIC ANHYDRASE 4"/>
    <property type="match status" value="1"/>
</dbReference>
<dbReference type="Pfam" id="PF00194">
    <property type="entry name" value="Carb_anhydrase"/>
    <property type="match status" value="1"/>
</dbReference>
<dbReference type="SMART" id="SM01057">
    <property type="entry name" value="Carb_anhydrase"/>
    <property type="match status" value="1"/>
</dbReference>
<dbReference type="SUPFAM" id="SSF51069">
    <property type="entry name" value="Carbonic anhydrase"/>
    <property type="match status" value="1"/>
</dbReference>
<dbReference type="PROSITE" id="PS51144">
    <property type="entry name" value="ALPHA_CA_2"/>
    <property type="match status" value="1"/>
</dbReference>
<reference key="1">
    <citation type="journal article" date="1997" name="Am. J. Physiol.">
        <title>Expression of carbonic anhydrase IV mRNA in rabbit kidney: stimulation by metabolic acidosis.</title>
        <authorList>
            <person name="Winkler C.A."/>
            <person name="Kittelberger A.M."/>
            <person name="Schwartz G.J."/>
        </authorList>
    </citation>
    <scope>NUCLEOTIDE SEQUENCE [MRNA]</scope>
    <source>
        <strain>New Zealand white</strain>
        <tissue>Kidney cortex</tissue>
    </source>
</reference>
<reference key="2">
    <citation type="submission" date="1996-05" db="EMBL/GenBank/DDBJ databases">
        <authorList>
            <person name="Tamai S."/>
        </authorList>
    </citation>
    <scope>NUCLEOTIDE SEQUENCE [MRNA]</scope>
    <source>
        <strain>New Zealand white</strain>
        <tissue>Kidney cortex</tissue>
    </source>
</reference>
<reference key="3">
    <citation type="journal article" date="2003" name="Biochemistry">
        <title>Direct extracellular interaction between carbonic anhydrase IV and the human NBC1 sodium/bicarbonate co-transporter.</title>
        <authorList>
            <person name="Alvarez B.V."/>
            <person name="Loiselle F.B."/>
            <person name="Supuran C.T."/>
            <person name="Schwartz G.J."/>
            <person name="Casey J.R."/>
        </authorList>
    </citation>
    <scope>INTERACTION WITH SLC4A4</scope>
</reference>
<organism>
    <name type="scientific">Oryctolagus cuniculus</name>
    <name type="common">Rabbit</name>
    <dbReference type="NCBI Taxonomy" id="9986"/>
    <lineage>
        <taxon>Eukaryota</taxon>
        <taxon>Metazoa</taxon>
        <taxon>Chordata</taxon>
        <taxon>Craniata</taxon>
        <taxon>Vertebrata</taxon>
        <taxon>Euteleostomi</taxon>
        <taxon>Mammalia</taxon>
        <taxon>Eutheria</taxon>
        <taxon>Euarchontoglires</taxon>
        <taxon>Glires</taxon>
        <taxon>Lagomorpha</taxon>
        <taxon>Leporidae</taxon>
        <taxon>Oryctolagus</taxon>
    </lineage>
</organism>